<proteinExistence type="evidence at protein level"/>
<protein>
    <recommendedName>
        <fullName evidence="3">LysM-domain containing protein</fullName>
    </recommendedName>
</protein>
<reference evidence="4" key="1">
    <citation type="journal article" date="2013" name="Carbohydr. Polym.">
        <title>Arabinogalactan protein cluster from Jatropha curcas seed embryo contains fasciclin, xylogen and LysM proteins.</title>
        <authorList>
            <person name="Sehlbach M."/>
            <person name="Konig S."/>
            <person name="Mormann M."/>
            <person name="Sendker J."/>
            <person name="Hensel A."/>
        </authorList>
    </citation>
    <scope>PROTEIN SEQUENCE</scope>
    <scope>IDENTIFICATION BY MASS SPECTROMETRY</scope>
    <source>
        <tissue evidence="2">Seed</tissue>
    </source>
</reference>
<name>LYM_JATCU</name>
<evidence type="ECO:0000255" key="1"/>
<evidence type="ECO:0000269" key="2">
    <source>
    </source>
</evidence>
<evidence type="ECO:0000303" key="3">
    <source>
    </source>
</evidence>
<evidence type="ECO:0000305" key="4"/>
<keyword id="KW-0903">Direct protein sequencing</keyword>
<accession>C0HJG7</accession>
<feature type="chain" id="PRO_0000426720" description="LysM-domain containing protein">
    <location>
        <begin position="1" status="less than"/>
        <end position="31" status="greater than"/>
    </location>
</feature>
<feature type="repeat" description="LysM 1" evidence="1">
    <location>
        <begin position="1" status="less than"/>
        <end position="28"/>
    </location>
</feature>
<feature type="non-terminal residue" evidence="3">
    <location>
        <position position="1"/>
    </location>
</feature>
<feature type="non-terminal residue" evidence="3">
    <location>
        <position position="31"/>
    </location>
</feature>
<organism>
    <name type="scientific">Jatropha curcas</name>
    <name type="common">Barbados nut</name>
    <dbReference type="NCBI Taxonomy" id="180498"/>
    <lineage>
        <taxon>Eukaryota</taxon>
        <taxon>Viridiplantae</taxon>
        <taxon>Streptophyta</taxon>
        <taxon>Embryophyta</taxon>
        <taxon>Tracheophyta</taxon>
        <taxon>Spermatophyta</taxon>
        <taxon>Magnoliopsida</taxon>
        <taxon>eudicotyledons</taxon>
        <taxon>Gunneridae</taxon>
        <taxon>Pentapetalae</taxon>
        <taxon>rosids</taxon>
        <taxon>fabids</taxon>
        <taxon>Malpighiales</taxon>
        <taxon>Euphorbiaceae</taxon>
        <taxon>Crotonoideae</taxon>
        <taxon>Jatropheae</taxon>
        <taxon>Jatropha</taxon>
    </lineage>
</organism>
<dbReference type="SMR" id="C0HJG7"/>
<sequence>YSPSLTDLQSYNAMNGPALKAGDILAVPLPA</sequence>